<comment type="function">
    <text evidence="1">Probably functions as a manganese efflux pump.</text>
</comment>
<comment type="subcellular location">
    <subcellularLocation>
        <location evidence="1">Cell inner membrane</location>
        <topology evidence="1">Multi-pass membrane protein</topology>
    </subcellularLocation>
</comment>
<comment type="similarity">
    <text evidence="1">Belongs to the MntP (TC 9.B.29) family.</text>
</comment>
<reference key="1">
    <citation type="journal article" date="2011" name="J. Bacteriol.">
        <title>Comparative genomics of 28 Salmonella enterica isolates: evidence for CRISPR-mediated adaptive sublineage evolution.</title>
        <authorList>
            <person name="Fricke W.F."/>
            <person name="Mammel M.K."/>
            <person name="McDermott P.F."/>
            <person name="Tartera C."/>
            <person name="White D.G."/>
            <person name="Leclerc J.E."/>
            <person name="Ravel J."/>
            <person name="Cebula T.A."/>
        </authorList>
    </citation>
    <scope>NUCLEOTIDE SEQUENCE [LARGE SCALE GENOMIC DNA]</scope>
    <source>
        <strain>SL254</strain>
    </source>
</reference>
<accession>B4SV75</accession>
<dbReference type="EMBL" id="CP001113">
    <property type="protein sequence ID" value="ACF62593.1"/>
    <property type="molecule type" value="Genomic_DNA"/>
</dbReference>
<dbReference type="RefSeq" id="WP_001518359.1">
    <property type="nucleotide sequence ID" value="NZ_CCMR01000003.1"/>
</dbReference>
<dbReference type="KEGG" id="see:SNSL254_A1974"/>
<dbReference type="HOGENOM" id="CLU_096410_0_0_6"/>
<dbReference type="Proteomes" id="UP000008824">
    <property type="component" value="Chromosome"/>
</dbReference>
<dbReference type="GO" id="GO:0005886">
    <property type="term" value="C:plasma membrane"/>
    <property type="evidence" value="ECO:0007669"/>
    <property type="project" value="UniProtKB-SubCell"/>
</dbReference>
<dbReference type="GO" id="GO:0005384">
    <property type="term" value="F:manganese ion transmembrane transporter activity"/>
    <property type="evidence" value="ECO:0007669"/>
    <property type="project" value="UniProtKB-UniRule"/>
</dbReference>
<dbReference type="HAMAP" id="MF_01521">
    <property type="entry name" value="MntP_pump"/>
    <property type="match status" value="1"/>
</dbReference>
<dbReference type="InterPro" id="IPR003810">
    <property type="entry name" value="Mntp/YtaF"/>
</dbReference>
<dbReference type="InterPro" id="IPR022929">
    <property type="entry name" value="Put_MntP"/>
</dbReference>
<dbReference type="NCBIfam" id="NF008546">
    <property type="entry name" value="PRK11469.1"/>
    <property type="match status" value="1"/>
</dbReference>
<dbReference type="PANTHER" id="PTHR35529">
    <property type="entry name" value="MANGANESE EFFLUX PUMP MNTP-RELATED"/>
    <property type="match status" value="1"/>
</dbReference>
<dbReference type="PANTHER" id="PTHR35529:SF1">
    <property type="entry name" value="MANGANESE EFFLUX PUMP MNTP-RELATED"/>
    <property type="match status" value="1"/>
</dbReference>
<dbReference type="Pfam" id="PF02659">
    <property type="entry name" value="Mntp"/>
    <property type="match status" value="1"/>
</dbReference>
<sequence length="188" mass="20049">MHFTATVLLAFGMSMDAFAASIGKGATLHKPKFSEALRTGLIFGAVETLTPLIGWGLGILASKFVLEWNHWIAFVLLIFLGGRMIIEGIRGGSDEDETPLRRHSFWLLVTTAIATSLDAMAVGVGLAFLQVNIIATALAIGCATLIMSTLGMMIGRFIGPMLGKRAEILGGVVLIGIGVQILWTHFHG</sequence>
<protein>
    <recommendedName>
        <fullName evidence="1">Probable manganese efflux pump MntP</fullName>
    </recommendedName>
</protein>
<feature type="chain" id="PRO_1000200040" description="Probable manganese efflux pump MntP">
    <location>
        <begin position="1"/>
        <end position="188"/>
    </location>
</feature>
<feature type="transmembrane region" description="Helical" evidence="1">
    <location>
        <begin position="3"/>
        <end position="23"/>
    </location>
</feature>
<feature type="transmembrane region" description="Helical" evidence="1">
    <location>
        <begin position="41"/>
        <end position="61"/>
    </location>
</feature>
<feature type="transmembrane region" description="Helical" evidence="1">
    <location>
        <begin position="66"/>
        <end position="86"/>
    </location>
</feature>
<feature type="transmembrane region" description="Helical" evidence="1">
    <location>
        <begin position="106"/>
        <end position="128"/>
    </location>
</feature>
<feature type="transmembrane region" description="Helical" evidence="1">
    <location>
        <begin position="143"/>
        <end position="163"/>
    </location>
</feature>
<feature type="transmembrane region" description="Helical" evidence="1">
    <location>
        <begin position="168"/>
        <end position="188"/>
    </location>
</feature>
<name>MNTP_SALNS</name>
<evidence type="ECO:0000255" key="1">
    <source>
        <dbReference type="HAMAP-Rule" id="MF_01521"/>
    </source>
</evidence>
<gene>
    <name evidence="1" type="primary">mntP</name>
    <name type="synonym">yebN</name>
    <name type="ordered locus">SNSL254_A1974</name>
</gene>
<keyword id="KW-0997">Cell inner membrane</keyword>
<keyword id="KW-1003">Cell membrane</keyword>
<keyword id="KW-0406">Ion transport</keyword>
<keyword id="KW-0464">Manganese</keyword>
<keyword id="KW-0472">Membrane</keyword>
<keyword id="KW-0812">Transmembrane</keyword>
<keyword id="KW-1133">Transmembrane helix</keyword>
<keyword id="KW-0813">Transport</keyword>
<organism>
    <name type="scientific">Salmonella newport (strain SL254)</name>
    <dbReference type="NCBI Taxonomy" id="423368"/>
    <lineage>
        <taxon>Bacteria</taxon>
        <taxon>Pseudomonadati</taxon>
        <taxon>Pseudomonadota</taxon>
        <taxon>Gammaproteobacteria</taxon>
        <taxon>Enterobacterales</taxon>
        <taxon>Enterobacteriaceae</taxon>
        <taxon>Salmonella</taxon>
    </lineage>
</organism>
<proteinExistence type="inferred from homology"/>